<dbReference type="EC" id="3.1.26.11" evidence="1"/>
<dbReference type="EMBL" id="AM295007">
    <property type="protein sequence ID" value="CAM30408.1"/>
    <property type="molecule type" value="Genomic_DNA"/>
</dbReference>
<dbReference type="RefSeq" id="WP_009881223.1">
    <property type="nucleotide sequence ID" value="NC_009332.1"/>
</dbReference>
<dbReference type="SMR" id="A2REY2"/>
<dbReference type="GeneID" id="69900974"/>
<dbReference type="KEGG" id="spf:SpyM51082"/>
<dbReference type="HOGENOM" id="CLU_031317_2_0_9"/>
<dbReference type="GO" id="GO:0042781">
    <property type="term" value="F:3'-tRNA processing endoribonuclease activity"/>
    <property type="evidence" value="ECO:0007669"/>
    <property type="project" value="UniProtKB-UniRule"/>
</dbReference>
<dbReference type="GO" id="GO:0008270">
    <property type="term" value="F:zinc ion binding"/>
    <property type="evidence" value="ECO:0007669"/>
    <property type="project" value="UniProtKB-UniRule"/>
</dbReference>
<dbReference type="CDD" id="cd07717">
    <property type="entry name" value="RNaseZ_ZiPD-like_MBL-fold"/>
    <property type="match status" value="1"/>
</dbReference>
<dbReference type="FunFam" id="3.60.15.10:FF:000002">
    <property type="entry name" value="Ribonuclease Z"/>
    <property type="match status" value="1"/>
</dbReference>
<dbReference type="Gene3D" id="3.60.15.10">
    <property type="entry name" value="Ribonuclease Z/Hydroxyacylglutathione hydrolase-like"/>
    <property type="match status" value="1"/>
</dbReference>
<dbReference type="HAMAP" id="MF_01818">
    <property type="entry name" value="RNase_Z_BN"/>
    <property type="match status" value="1"/>
</dbReference>
<dbReference type="InterPro" id="IPR001279">
    <property type="entry name" value="Metallo-B-lactamas"/>
</dbReference>
<dbReference type="InterPro" id="IPR036866">
    <property type="entry name" value="RibonucZ/Hydroxyglut_hydro"/>
</dbReference>
<dbReference type="InterPro" id="IPR013471">
    <property type="entry name" value="RNase_Z/BN"/>
</dbReference>
<dbReference type="NCBIfam" id="NF000801">
    <property type="entry name" value="PRK00055.1-3"/>
    <property type="match status" value="1"/>
</dbReference>
<dbReference type="NCBIfam" id="TIGR02651">
    <property type="entry name" value="RNase_Z"/>
    <property type="match status" value="1"/>
</dbReference>
<dbReference type="PANTHER" id="PTHR46018">
    <property type="entry name" value="ZINC PHOSPHODIESTERASE ELAC PROTEIN 1"/>
    <property type="match status" value="1"/>
</dbReference>
<dbReference type="PANTHER" id="PTHR46018:SF2">
    <property type="entry name" value="ZINC PHOSPHODIESTERASE ELAC PROTEIN 1"/>
    <property type="match status" value="1"/>
</dbReference>
<dbReference type="Pfam" id="PF00753">
    <property type="entry name" value="Lactamase_B"/>
    <property type="match status" value="1"/>
</dbReference>
<dbReference type="SUPFAM" id="SSF56281">
    <property type="entry name" value="Metallo-hydrolase/oxidoreductase"/>
    <property type="match status" value="1"/>
</dbReference>
<name>RNZ_STRPG</name>
<gene>
    <name evidence="1" type="primary">rnz</name>
    <name type="ordered locus">SpyM51082</name>
</gene>
<proteinExistence type="inferred from homology"/>
<sequence>MELQFLGTGAGQPAKQRNVSSLALKLLDEINEVWMFDCGEGTQRQILETTIKPRKIRKIFITHLHGDHIFGLPGFLSSRSFQASEEQTDLDIYGPIGIKTYVLTSLKVSGARVPYQIHFHEFDDKSLGKIMETDKFVVYAERLAHTIFCMGYRVVQKDLEGTLDAEALKAAGVPFGPLFGKIKNGQDVELEDGRLICAKDYISAPKKGKIITIIGDTRKTSASVKLAKDADVLVHESTYGKGDERIARNHGHSTNMQAAQIAHEAGAKRLLLNHVSARFLGRDCRQMEKDAATIFENVKMVQDLEEVII</sequence>
<feature type="chain" id="PRO_1000070339" description="Ribonuclease Z">
    <location>
        <begin position="1"/>
        <end position="309"/>
    </location>
</feature>
<feature type="active site" description="Proton acceptor" evidence="1">
    <location>
        <position position="67"/>
    </location>
</feature>
<feature type="binding site" evidence="1">
    <location>
        <position position="63"/>
    </location>
    <ligand>
        <name>Zn(2+)</name>
        <dbReference type="ChEBI" id="CHEBI:29105"/>
        <label>1</label>
        <note>catalytic</note>
    </ligand>
</feature>
<feature type="binding site" evidence="1">
    <location>
        <position position="65"/>
    </location>
    <ligand>
        <name>Zn(2+)</name>
        <dbReference type="ChEBI" id="CHEBI:29105"/>
        <label>1</label>
        <note>catalytic</note>
    </ligand>
</feature>
<feature type="binding site" evidence="1">
    <location>
        <position position="67"/>
    </location>
    <ligand>
        <name>Zn(2+)</name>
        <dbReference type="ChEBI" id="CHEBI:29105"/>
        <label>2</label>
        <note>catalytic</note>
    </ligand>
</feature>
<feature type="binding site" evidence="1">
    <location>
        <position position="68"/>
    </location>
    <ligand>
        <name>Zn(2+)</name>
        <dbReference type="ChEBI" id="CHEBI:29105"/>
        <label>2</label>
        <note>catalytic</note>
    </ligand>
</feature>
<feature type="binding site" evidence="1">
    <location>
        <position position="145"/>
    </location>
    <ligand>
        <name>Zn(2+)</name>
        <dbReference type="ChEBI" id="CHEBI:29105"/>
        <label>1</label>
        <note>catalytic</note>
    </ligand>
</feature>
<feature type="binding site" evidence="1">
    <location>
        <position position="216"/>
    </location>
    <ligand>
        <name>Zn(2+)</name>
        <dbReference type="ChEBI" id="CHEBI:29105"/>
        <label>1</label>
        <note>catalytic</note>
    </ligand>
</feature>
<feature type="binding site" evidence="1">
    <location>
        <position position="216"/>
    </location>
    <ligand>
        <name>Zn(2+)</name>
        <dbReference type="ChEBI" id="CHEBI:29105"/>
        <label>2</label>
        <note>catalytic</note>
    </ligand>
</feature>
<feature type="binding site" evidence="1">
    <location>
        <position position="274"/>
    </location>
    <ligand>
        <name>Zn(2+)</name>
        <dbReference type="ChEBI" id="CHEBI:29105"/>
        <label>2</label>
        <note>catalytic</note>
    </ligand>
</feature>
<comment type="function">
    <text evidence="1">Zinc phosphodiesterase, which displays some tRNA 3'-processing endonuclease activity. Probably involved in tRNA maturation, by removing a 3'-trailer from precursor tRNA.</text>
</comment>
<comment type="catalytic activity">
    <reaction evidence="1">
        <text>Endonucleolytic cleavage of RNA, removing extra 3' nucleotides from tRNA precursor, generating 3' termini of tRNAs. A 3'-hydroxy group is left at the tRNA terminus and a 5'-phosphoryl group is left at the trailer molecule.</text>
        <dbReference type="EC" id="3.1.26.11"/>
    </reaction>
</comment>
<comment type="cofactor">
    <cofactor evidence="1">
        <name>Zn(2+)</name>
        <dbReference type="ChEBI" id="CHEBI:29105"/>
    </cofactor>
    <text evidence="1">Binds 2 Zn(2+) ions.</text>
</comment>
<comment type="subunit">
    <text evidence="1">Homodimer.</text>
</comment>
<comment type="similarity">
    <text evidence="1">Belongs to the RNase Z family.</text>
</comment>
<accession>A2REY2</accession>
<evidence type="ECO:0000255" key="1">
    <source>
        <dbReference type="HAMAP-Rule" id="MF_01818"/>
    </source>
</evidence>
<organism>
    <name type="scientific">Streptococcus pyogenes serotype M5 (strain Manfredo)</name>
    <dbReference type="NCBI Taxonomy" id="160491"/>
    <lineage>
        <taxon>Bacteria</taxon>
        <taxon>Bacillati</taxon>
        <taxon>Bacillota</taxon>
        <taxon>Bacilli</taxon>
        <taxon>Lactobacillales</taxon>
        <taxon>Streptococcaceae</taxon>
        <taxon>Streptococcus</taxon>
    </lineage>
</organism>
<keyword id="KW-0255">Endonuclease</keyword>
<keyword id="KW-0378">Hydrolase</keyword>
<keyword id="KW-0479">Metal-binding</keyword>
<keyword id="KW-0540">Nuclease</keyword>
<keyword id="KW-0819">tRNA processing</keyword>
<keyword id="KW-0862">Zinc</keyword>
<reference key="1">
    <citation type="journal article" date="2007" name="J. Bacteriol.">
        <title>Complete genome of acute rheumatic fever-associated serotype M5 Streptococcus pyogenes strain Manfredo.</title>
        <authorList>
            <person name="Holden M.T.G."/>
            <person name="Scott A."/>
            <person name="Cherevach I."/>
            <person name="Chillingworth T."/>
            <person name="Churcher C."/>
            <person name="Cronin A."/>
            <person name="Dowd L."/>
            <person name="Feltwell T."/>
            <person name="Hamlin N."/>
            <person name="Holroyd S."/>
            <person name="Jagels K."/>
            <person name="Moule S."/>
            <person name="Mungall K."/>
            <person name="Quail M.A."/>
            <person name="Price C."/>
            <person name="Rabbinowitsch E."/>
            <person name="Sharp S."/>
            <person name="Skelton J."/>
            <person name="Whitehead S."/>
            <person name="Barrell B.G."/>
            <person name="Kehoe M."/>
            <person name="Parkhill J."/>
        </authorList>
    </citation>
    <scope>NUCLEOTIDE SEQUENCE [LARGE SCALE GENOMIC DNA]</scope>
    <source>
        <strain>Manfredo</strain>
    </source>
</reference>
<protein>
    <recommendedName>
        <fullName evidence="1">Ribonuclease Z</fullName>
        <shortName evidence="1">RNase Z</shortName>
        <ecNumber evidence="1">3.1.26.11</ecNumber>
    </recommendedName>
    <alternativeName>
        <fullName evidence="1">tRNA 3 endonuclease</fullName>
    </alternativeName>
    <alternativeName>
        <fullName evidence="1">tRNase Z</fullName>
    </alternativeName>
</protein>